<keyword id="KW-0025">Alternative splicing</keyword>
<keyword id="KW-0963">Cytoplasm</keyword>
<keyword id="KW-1185">Reference proteome</keyword>
<keyword id="KW-0687">Ribonucleoprotein</keyword>
<keyword id="KW-0694">RNA-binding</keyword>
<keyword id="KW-0733">Signal recognition particle</keyword>
<gene>
    <name type="primary">SRP14</name>
    <name type="ordered locus">At2g43640</name>
    <name type="ORF">F18O19.25</name>
</gene>
<organism>
    <name type="scientific">Arabidopsis thaliana</name>
    <name type="common">Mouse-ear cress</name>
    <dbReference type="NCBI Taxonomy" id="3702"/>
    <lineage>
        <taxon>Eukaryota</taxon>
        <taxon>Viridiplantae</taxon>
        <taxon>Streptophyta</taxon>
        <taxon>Embryophyta</taxon>
        <taxon>Tracheophyta</taxon>
        <taxon>Spermatophyta</taxon>
        <taxon>Magnoliopsida</taxon>
        <taxon>eudicotyledons</taxon>
        <taxon>Gunneridae</taxon>
        <taxon>Pentapetalae</taxon>
        <taxon>rosids</taxon>
        <taxon>malvids</taxon>
        <taxon>Brassicales</taxon>
        <taxon>Brassicaceae</taxon>
        <taxon>Camelineae</taxon>
        <taxon>Arabidopsis</taxon>
    </lineage>
</organism>
<dbReference type="EMBL" id="Y10116">
    <property type="protein sequence ID" value="CAA71202.1"/>
    <property type="molecule type" value="mRNA"/>
</dbReference>
<dbReference type="EMBL" id="AC002333">
    <property type="protein sequence ID" value="AAB64042.1"/>
    <property type="molecule type" value="Genomic_DNA"/>
</dbReference>
<dbReference type="EMBL" id="CP002685">
    <property type="protein sequence ID" value="AEC10298.1"/>
    <property type="molecule type" value="Genomic_DNA"/>
</dbReference>
<dbReference type="EMBL" id="CP002685">
    <property type="protein sequence ID" value="AEC10299.1"/>
    <property type="molecule type" value="Genomic_DNA"/>
</dbReference>
<dbReference type="EMBL" id="BT003088">
    <property type="protein sequence ID" value="AAO23653.1"/>
    <property type="molecule type" value="mRNA"/>
</dbReference>
<dbReference type="EMBL" id="AK227403">
    <property type="protein sequence ID" value="BAE99407.1"/>
    <property type="molecule type" value="mRNA"/>
</dbReference>
<dbReference type="EMBL" id="AY088850">
    <property type="protein sequence ID" value="AAM67157.1"/>
    <property type="molecule type" value="mRNA"/>
</dbReference>
<dbReference type="PIR" id="F84868">
    <property type="entry name" value="F84868"/>
</dbReference>
<dbReference type="RefSeq" id="NP_001078050.1">
    <molecule id="O04421-1"/>
    <property type="nucleotide sequence ID" value="NM_001084581.2"/>
</dbReference>
<dbReference type="RefSeq" id="NP_181892.1">
    <molecule id="O04421-1"/>
    <property type="nucleotide sequence ID" value="NM_129926.2"/>
</dbReference>
<dbReference type="SMR" id="O04421"/>
<dbReference type="BioGRID" id="4302">
    <property type="interactions" value="2"/>
</dbReference>
<dbReference type="FunCoup" id="O04421">
    <property type="interactions" value="3302"/>
</dbReference>
<dbReference type="IntAct" id="O04421">
    <property type="interactions" value="2"/>
</dbReference>
<dbReference type="STRING" id="3702.O04421"/>
<dbReference type="PaxDb" id="3702-AT2G43640.1"/>
<dbReference type="ProteomicsDB" id="226736">
    <molecule id="O04421-1"/>
</dbReference>
<dbReference type="EnsemblPlants" id="AT2G43640.1">
    <molecule id="O04421-1"/>
    <property type="protein sequence ID" value="AT2G43640.1"/>
    <property type="gene ID" value="AT2G43640"/>
</dbReference>
<dbReference type="EnsemblPlants" id="AT2G43640.2">
    <molecule id="O04421-1"/>
    <property type="protein sequence ID" value="AT2G43640.2"/>
    <property type="gene ID" value="AT2G43640"/>
</dbReference>
<dbReference type="GeneID" id="818966"/>
<dbReference type="Gramene" id="AT2G43640.1">
    <molecule id="O04421-1"/>
    <property type="protein sequence ID" value="AT2G43640.1"/>
    <property type="gene ID" value="AT2G43640"/>
</dbReference>
<dbReference type="Gramene" id="AT2G43640.2">
    <molecule id="O04421-1"/>
    <property type="protein sequence ID" value="AT2G43640.2"/>
    <property type="gene ID" value="AT2G43640"/>
</dbReference>
<dbReference type="KEGG" id="ath:AT2G43640"/>
<dbReference type="Araport" id="AT2G43640"/>
<dbReference type="TAIR" id="AT2G43640"/>
<dbReference type="eggNOG" id="KOG1761">
    <property type="taxonomic scope" value="Eukaryota"/>
</dbReference>
<dbReference type="HOGENOM" id="CLU_094309_2_0_1"/>
<dbReference type="InParanoid" id="O04421"/>
<dbReference type="OMA" id="RFNGHNK"/>
<dbReference type="OrthoDB" id="19209at2759"/>
<dbReference type="PhylomeDB" id="O04421"/>
<dbReference type="PRO" id="PR:O04421"/>
<dbReference type="Proteomes" id="UP000006548">
    <property type="component" value="Chromosome 2"/>
</dbReference>
<dbReference type="ExpressionAtlas" id="O04421">
    <property type="expression patterns" value="baseline and differential"/>
</dbReference>
<dbReference type="GO" id="GO:0005829">
    <property type="term" value="C:cytosol"/>
    <property type="evidence" value="ECO:0007005"/>
    <property type="project" value="TAIR"/>
</dbReference>
<dbReference type="GO" id="GO:0005786">
    <property type="term" value="C:signal recognition particle, endoplasmic reticulum targeting"/>
    <property type="evidence" value="ECO:0007669"/>
    <property type="project" value="UniProtKB-KW"/>
</dbReference>
<dbReference type="GO" id="GO:0008312">
    <property type="term" value="F:7S RNA binding"/>
    <property type="evidence" value="ECO:0007669"/>
    <property type="project" value="InterPro"/>
</dbReference>
<dbReference type="GO" id="GO:0030942">
    <property type="term" value="F:endoplasmic reticulum signal peptide binding"/>
    <property type="evidence" value="ECO:0007669"/>
    <property type="project" value="InterPro"/>
</dbReference>
<dbReference type="GO" id="GO:0006614">
    <property type="term" value="P:SRP-dependent cotranslational protein targeting to membrane"/>
    <property type="evidence" value="ECO:0007669"/>
    <property type="project" value="InterPro"/>
</dbReference>
<dbReference type="FunFam" id="3.30.720.10:FF:000004">
    <property type="entry name" value="Signal recognition particle 14 kDa protein"/>
    <property type="match status" value="1"/>
</dbReference>
<dbReference type="Gene3D" id="3.30.720.10">
    <property type="entry name" value="Signal recognition particle alu RNA binding heterodimer, srp9/1"/>
    <property type="match status" value="1"/>
</dbReference>
<dbReference type="InterPro" id="IPR003210">
    <property type="entry name" value="Signal_recog_particle_SRP14"/>
</dbReference>
<dbReference type="InterPro" id="IPR009018">
    <property type="entry name" value="Signal_recog_particle_SRP9/14"/>
</dbReference>
<dbReference type="PANTHER" id="PTHR12013">
    <property type="entry name" value="SIGNAL RECOGNITION PARTICLE 14 KD PROTEIN"/>
    <property type="match status" value="1"/>
</dbReference>
<dbReference type="Pfam" id="PF02290">
    <property type="entry name" value="SRP14"/>
    <property type="match status" value="1"/>
</dbReference>
<dbReference type="SUPFAM" id="SSF54762">
    <property type="entry name" value="Signal recognition particle alu RNA binding heterodimer, SRP9/14"/>
    <property type="match status" value="1"/>
</dbReference>
<protein>
    <recommendedName>
        <fullName>Signal recognition particle 14 kDa protein</fullName>
        <shortName>SRP14</shortName>
    </recommendedName>
</protein>
<name>SRP14_ARATH</name>
<evidence type="ECO:0000250" key="1">
    <source>
        <dbReference type="UniProtKB" id="P16255"/>
    </source>
</evidence>
<evidence type="ECO:0000250" key="2">
    <source>
        <dbReference type="UniProtKB" id="P37108"/>
    </source>
</evidence>
<evidence type="ECO:0000256" key="3">
    <source>
        <dbReference type="SAM" id="MobiDB-lite"/>
    </source>
</evidence>
<evidence type="ECO:0000305" key="4"/>
<feature type="chain" id="PRO_0000135193" description="Signal recognition particle 14 kDa protein">
    <location>
        <begin position="1"/>
        <end position="121"/>
    </location>
</feature>
<feature type="region of interest" description="Disordered" evidence="3">
    <location>
        <begin position="93"/>
        <end position="121"/>
    </location>
</feature>
<feature type="compositionally biased region" description="Basic residues" evidence="3">
    <location>
        <begin position="93"/>
        <end position="102"/>
    </location>
</feature>
<feature type="compositionally biased region" description="Basic and acidic residues" evidence="3">
    <location>
        <begin position="103"/>
        <end position="112"/>
    </location>
</feature>
<feature type="sequence conflict" description="In Ref. 1; CAA71202." evidence="4" ref="1">
    <original>T</original>
    <variation>P</variation>
    <location>
        <position position="116"/>
    </location>
</feature>
<accession>O04421</accession>
<accession>O22839</accession>
<accession>Q53YG7</accession>
<proteinExistence type="evidence at transcript level"/>
<sequence>MVLLQLDPFLNELTSMFEKSKEKGSVWVTLKRSSLKSKVQKRKLSSVGESIEYRCLIRATDGKKTVSTSVGAKDHQRFQASYATILKAHMTALKKRERKDRKKSTEAEKKESTSTTKSKKL</sequence>
<comment type="function">
    <text evidence="2">Component of the signal recognition particle (SRP) complex, a ribonucleoprotein complex that mediates the cotranslational targeting of secretory and membrane proteins to the endoplasmic reticulum (ER) (By similarity). SRP9 together with SRP14 and the Alu portion of the SRP RNA, constitutes the elongation arrest domain of SRP (By similarity). The complex of SRP9 and SRP14 is required for SRP RNA binding (By similarity).</text>
</comment>
<comment type="subunit">
    <text evidence="1 2">Heterodimer with SRP9; binds RNA as heterodimer (By similarity). Component of a signal recognition particle (SRP) complex that consists of a 7SL RNA molecule of 300 nucleotides and six protein subunits: SRP72, SRP68, SRP54, SRP19, SRP14 and SRP9 (By similarity).</text>
</comment>
<comment type="subcellular location">
    <subcellularLocation>
        <location>Cytoplasm</location>
    </subcellularLocation>
</comment>
<comment type="alternative products">
    <event type="alternative splicing"/>
    <isoform>
        <id>O04421-1</id>
        <name>1</name>
        <sequence type="displayed"/>
    </isoform>
    <text>A number of isoforms are produced. According to EST sequences.</text>
</comment>
<comment type="similarity">
    <text evidence="4">Belongs to the SRP14 family.</text>
</comment>
<reference key="1">
    <citation type="submission" date="1996-12" db="EMBL/GenBank/DDBJ databases">
        <authorList>
            <person name="Bui N."/>
            <person name="Wolff N."/>
            <person name="Strub K."/>
        </authorList>
    </citation>
    <scope>NUCLEOTIDE SEQUENCE [MRNA]</scope>
    <source>
        <strain>cv. Columbia</strain>
        <tissue>Root</tissue>
    </source>
</reference>
<reference key="2">
    <citation type="journal article" date="1999" name="Nature">
        <title>Sequence and analysis of chromosome 2 of the plant Arabidopsis thaliana.</title>
        <authorList>
            <person name="Lin X."/>
            <person name="Kaul S."/>
            <person name="Rounsley S.D."/>
            <person name="Shea T.P."/>
            <person name="Benito M.-I."/>
            <person name="Town C.D."/>
            <person name="Fujii C.Y."/>
            <person name="Mason T.M."/>
            <person name="Bowman C.L."/>
            <person name="Barnstead M.E."/>
            <person name="Feldblyum T.V."/>
            <person name="Buell C.R."/>
            <person name="Ketchum K.A."/>
            <person name="Lee J.J."/>
            <person name="Ronning C.M."/>
            <person name="Koo H.L."/>
            <person name="Moffat K.S."/>
            <person name="Cronin L.A."/>
            <person name="Shen M."/>
            <person name="Pai G."/>
            <person name="Van Aken S."/>
            <person name="Umayam L."/>
            <person name="Tallon L.J."/>
            <person name="Gill J.E."/>
            <person name="Adams M.D."/>
            <person name="Carrera A.J."/>
            <person name="Creasy T.H."/>
            <person name="Goodman H.M."/>
            <person name="Somerville C.R."/>
            <person name="Copenhaver G.P."/>
            <person name="Preuss D."/>
            <person name="Nierman W.C."/>
            <person name="White O."/>
            <person name="Eisen J.A."/>
            <person name="Salzberg S.L."/>
            <person name="Fraser C.M."/>
            <person name="Venter J.C."/>
        </authorList>
    </citation>
    <scope>NUCLEOTIDE SEQUENCE [LARGE SCALE GENOMIC DNA]</scope>
    <source>
        <strain>cv. Columbia</strain>
    </source>
</reference>
<reference key="3">
    <citation type="journal article" date="2017" name="Plant J.">
        <title>Araport11: a complete reannotation of the Arabidopsis thaliana reference genome.</title>
        <authorList>
            <person name="Cheng C.Y."/>
            <person name="Krishnakumar V."/>
            <person name="Chan A.P."/>
            <person name="Thibaud-Nissen F."/>
            <person name="Schobel S."/>
            <person name="Town C.D."/>
        </authorList>
    </citation>
    <scope>GENOME REANNOTATION</scope>
    <source>
        <strain>cv. Columbia</strain>
    </source>
</reference>
<reference key="4">
    <citation type="journal article" date="2003" name="Science">
        <title>Empirical analysis of transcriptional activity in the Arabidopsis genome.</title>
        <authorList>
            <person name="Yamada K."/>
            <person name="Lim J."/>
            <person name="Dale J.M."/>
            <person name="Chen H."/>
            <person name="Shinn P."/>
            <person name="Palm C.J."/>
            <person name="Southwick A.M."/>
            <person name="Wu H.C."/>
            <person name="Kim C.J."/>
            <person name="Nguyen M."/>
            <person name="Pham P.K."/>
            <person name="Cheuk R.F."/>
            <person name="Karlin-Newmann G."/>
            <person name="Liu S.X."/>
            <person name="Lam B."/>
            <person name="Sakano H."/>
            <person name="Wu T."/>
            <person name="Yu G."/>
            <person name="Miranda M."/>
            <person name="Quach H.L."/>
            <person name="Tripp M."/>
            <person name="Chang C.H."/>
            <person name="Lee J.M."/>
            <person name="Toriumi M.J."/>
            <person name="Chan M.M."/>
            <person name="Tang C.C."/>
            <person name="Onodera C.S."/>
            <person name="Deng J.M."/>
            <person name="Akiyama K."/>
            <person name="Ansari Y."/>
            <person name="Arakawa T."/>
            <person name="Banh J."/>
            <person name="Banno F."/>
            <person name="Bowser L."/>
            <person name="Brooks S.Y."/>
            <person name="Carninci P."/>
            <person name="Chao Q."/>
            <person name="Choy N."/>
            <person name="Enju A."/>
            <person name="Goldsmith A.D."/>
            <person name="Gurjal M."/>
            <person name="Hansen N.F."/>
            <person name="Hayashizaki Y."/>
            <person name="Johnson-Hopson C."/>
            <person name="Hsuan V.W."/>
            <person name="Iida K."/>
            <person name="Karnes M."/>
            <person name="Khan S."/>
            <person name="Koesema E."/>
            <person name="Ishida J."/>
            <person name="Jiang P.X."/>
            <person name="Jones T."/>
            <person name="Kawai J."/>
            <person name="Kamiya A."/>
            <person name="Meyers C."/>
            <person name="Nakajima M."/>
            <person name="Narusaka M."/>
            <person name="Seki M."/>
            <person name="Sakurai T."/>
            <person name="Satou M."/>
            <person name="Tamse R."/>
            <person name="Vaysberg M."/>
            <person name="Wallender E.K."/>
            <person name="Wong C."/>
            <person name="Yamamura Y."/>
            <person name="Yuan S."/>
            <person name="Shinozaki K."/>
            <person name="Davis R.W."/>
            <person name="Theologis A."/>
            <person name="Ecker J.R."/>
        </authorList>
    </citation>
    <scope>NUCLEOTIDE SEQUENCE [LARGE SCALE MRNA]</scope>
    <source>
        <strain>cv. Columbia</strain>
    </source>
</reference>
<reference key="5">
    <citation type="submission" date="2006-07" db="EMBL/GenBank/DDBJ databases">
        <title>Large-scale analysis of RIKEN Arabidopsis full-length (RAFL) cDNAs.</title>
        <authorList>
            <person name="Totoki Y."/>
            <person name="Seki M."/>
            <person name="Ishida J."/>
            <person name="Nakajima M."/>
            <person name="Enju A."/>
            <person name="Kamiya A."/>
            <person name="Narusaka M."/>
            <person name="Shin-i T."/>
            <person name="Nakagawa M."/>
            <person name="Sakamoto N."/>
            <person name="Oishi K."/>
            <person name="Kohara Y."/>
            <person name="Kobayashi M."/>
            <person name="Toyoda A."/>
            <person name="Sakaki Y."/>
            <person name="Sakurai T."/>
            <person name="Iida K."/>
            <person name="Akiyama K."/>
            <person name="Satou M."/>
            <person name="Toyoda T."/>
            <person name="Konagaya A."/>
            <person name="Carninci P."/>
            <person name="Kawai J."/>
            <person name="Hayashizaki Y."/>
            <person name="Shinozaki K."/>
        </authorList>
    </citation>
    <scope>NUCLEOTIDE SEQUENCE [LARGE SCALE MRNA]</scope>
    <source>
        <strain>cv. Columbia</strain>
    </source>
</reference>
<reference key="6">
    <citation type="submission" date="2002-03" db="EMBL/GenBank/DDBJ databases">
        <title>Full-length cDNA from Arabidopsis thaliana.</title>
        <authorList>
            <person name="Brover V.V."/>
            <person name="Troukhan M.E."/>
            <person name="Alexandrov N.A."/>
            <person name="Lu Y.-P."/>
            <person name="Flavell R.B."/>
            <person name="Feldmann K.A."/>
        </authorList>
    </citation>
    <scope>NUCLEOTIDE SEQUENCE [LARGE SCALE MRNA]</scope>
</reference>